<dbReference type="EMBL" id="BX897699">
    <property type="protein sequence ID" value="CAF27838.1"/>
    <property type="molecule type" value="Genomic_DNA"/>
</dbReference>
<dbReference type="RefSeq" id="WP_011180910.1">
    <property type="nucleotide sequence ID" value="NZ_LRIJ02000001.1"/>
</dbReference>
<dbReference type="SMR" id="Q6G2W9"/>
<dbReference type="PaxDb" id="283166-BH10470"/>
<dbReference type="EnsemblBacteria" id="CAF27838">
    <property type="protein sequence ID" value="CAF27838"/>
    <property type="gene ID" value="BH10470"/>
</dbReference>
<dbReference type="GeneID" id="92985267"/>
<dbReference type="KEGG" id="bhe:BH10470"/>
<dbReference type="eggNOG" id="COG0185">
    <property type="taxonomic scope" value="Bacteria"/>
</dbReference>
<dbReference type="OrthoDB" id="9797833at2"/>
<dbReference type="Proteomes" id="UP000000421">
    <property type="component" value="Chromosome"/>
</dbReference>
<dbReference type="GO" id="GO:0005737">
    <property type="term" value="C:cytoplasm"/>
    <property type="evidence" value="ECO:0007669"/>
    <property type="project" value="UniProtKB-ARBA"/>
</dbReference>
<dbReference type="GO" id="GO:0015935">
    <property type="term" value="C:small ribosomal subunit"/>
    <property type="evidence" value="ECO:0007669"/>
    <property type="project" value="InterPro"/>
</dbReference>
<dbReference type="GO" id="GO:0019843">
    <property type="term" value="F:rRNA binding"/>
    <property type="evidence" value="ECO:0007669"/>
    <property type="project" value="UniProtKB-UniRule"/>
</dbReference>
<dbReference type="GO" id="GO:0003735">
    <property type="term" value="F:structural constituent of ribosome"/>
    <property type="evidence" value="ECO:0007669"/>
    <property type="project" value="InterPro"/>
</dbReference>
<dbReference type="GO" id="GO:0000028">
    <property type="term" value="P:ribosomal small subunit assembly"/>
    <property type="evidence" value="ECO:0007669"/>
    <property type="project" value="TreeGrafter"/>
</dbReference>
<dbReference type="GO" id="GO:0006412">
    <property type="term" value="P:translation"/>
    <property type="evidence" value="ECO:0007669"/>
    <property type="project" value="UniProtKB-UniRule"/>
</dbReference>
<dbReference type="FunFam" id="3.30.860.10:FF:000001">
    <property type="entry name" value="30S ribosomal protein S19"/>
    <property type="match status" value="1"/>
</dbReference>
<dbReference type="Gene3D" id="3.30.860.10">
    <property type="entry name" value="30s Ribosomal Protein S19, Chain A"/>
    <property type="match status" value="1"/>
</dbReference>
<dbReference type="HAMAP" id="MF_00531">
    <property type="entry name" value="Ribosomal_uS19"/>
    <property type="match status" value="1"/>
</dbReference>
<dbReference type="InterPro" id="IPR002222">
    <property type="entry name" value="Ribosomal_uS19"/>
</dbReference>
<dbReference type="InterPro" id="IPR005732">
    <property type="entry name" value="Ribosomal_uS19_bac-type"/>
</dbReference>
<dbReference type="InterPro" id="IPR020934">
    <property type="entry name" value="Ribosomal_uS19_CS"/>
</dbReference>
<dbReference type="InterPro" id="IPR023575">
    <property type="entry name" value="Ribosomal_uS19_SF"/>
</dbReference>
<dbReference type="NCBIfam" id="TIGR01050">
    <property type="entry name" value="rpsS_bact"/>
    <property type="match status" value="1"/>
</dbReference>
<dbReference type="PANTHER" id="PTHR11880">
    <property type="entry name" value="RIBOSOMAL PROTEIN S19P FAMILY MEMBER"/>
    <property type="match status" value="1"/>
</dbReference>
<dbReference type="PANTHER" id="PTHR11880:SF8">
    <property type="entry name" value="SMALL RIBOSOMAL SUBUNIT PROTEIN US19M"/>
    <property type="match status" value="1"/>
</dbReference>
<dbReference type="Pfam" id="PF00203">
    <property type="entry name" value="Ribosomal_S19"/>
    <property type="match status" value="1"/>
</dbReference>
<dbReference type="PIRSF" id="PIRSF002144">
    <property type="entry name" value="Ribosomal_S19"/>
    <property type="match status" value="1"/>
</dbReference>
<dbReference type="PRINTS" id="PR00975">
    <property type="entry name" value="RIBOSOMALS19"/>
</dbReference>
<dbReference type="SUPFAM" id="SSF54570">
    <property type="entry name" value="Ribosomal protein S19"/>
    <property type="match status" value="1"/>
</dbReference>
<dbReference type="PROSITE" id="PS00323">
    <property type="entry name" value="RIBOSOMAL_S19"/>
    <property type="match status" value="1"/>
</dbReference>
<evidence type="ECO:0000255" key="1">
    <source>
        <dbReference type="HAMAP-Rule" id="MF_00531"/>
    </source>
</evidence>
<evidence type="ECO:0000305" key="2"/>
<reference key="1">
    <citation type="journal article" date="2004" name="Proc. Natl. Acad. Sci. U.S.A.">
        <title>The louse-borne human pathogen Bartonella quintana is a genomic derivative of the zoonotic agent Bartonella henselae.</title>
        <authorList>
            <person name="Alsmark U.C.M."/>
            <person name="Frank A.C."/>
            <person name="Karlberg E.O."/>
            <person name="Legault B.-A."/>
            <person name="Ardell D.H."/>
            <person name="Canbaeck B."/>
            <person name="Eriksson A.-S."/>
            <person name="Naeslund A.K."/>
            <person name="Handley S.A."/>
            <person name="Huvet M."/>
            <person name="La Scola B."/>
            <person name="Holmberg M."/>
            <person name="Andersson S.G.E."/>
        </authorList>
    </citation>
    <scope>NUCLEOTIDE SEQUENCE [LARGE SCALE GENOMIC DNA]</scope>
    <source>
        <strain>ATCC 49882 / DSM 28221 / CCUG 30454 / Houston 1</strain>
    </source>
</reference>
<accession>Q6G2W9</accession>
<gene>
    <name evidence="1" type="primary">rpsS</name>
    <name type="ordered locus">BH10470</name>
</gene>
<name>RS19_BARHE</name>
<feature type="chain" id="PRO_0000129782" description="Small ribosomal subunit protein uS19">
    <location>
        <begin position="1"/>
        <end position="92"/>
    </location>
</feature>
<keyword id="KW-0687">Ribonucleoprotein</keyword>
<keyword id="KW-0689">Ribosomal protein</keyword>
<keyword id="KW-0694">RNA-binding</keyword>
<keyword id="KW-0699">rRNA-binding</keyword>
<sequence length="92" mass="10343">MVRSVWKGPFVDGYLLGKAEKVRASGRNEVIKIWSRRSTILPQFVGLTFGVHNGNKHIPVSVSEEMVGHKFGEFAPTRTYYGHGADKKAKRK</sequence>
<comment type="function">
    <text evidence="1">Protein S19 forms a complex with S13 that binds strongly to the 16S ribosomal RNA.</text>
</comment>
<comment type="similarity">
    <text evidence="1">Belongs to the universal ribosomal protein uS19 family.</text>
</comment>
<proteinExistence type="inferred from homology"/>
<organism>
    <name type="scientific">Bartonella henselae (strain ATCC 49882 / DSM 28221 / CCUG 30454 / Houston 1)</name>
    <name type="common">Rochalimaea henselae</name>
    <dbReference type="NCBI Taxonomy" id="283166"/>
    <lineage>
        <taxon>Bacteria</taxon>
        <taxon>Pseudomonadati</taxon>
        <taxon>Pseudomonadota</taxon>
        <taxon>Alphaproteobacteria</taxon>
        <taxon>Hyphomicrobiales</taxon>
        <taxon>Bartonellaceae</taxon>
        <taxon>Bartonella</taxon>
    </lineage>
</organism>
<protein>
    <recommendedName>
        <fullName evidence="1">Small ribosomal subunit protein uS19</fullName>
    </recommendedName>
    <alternativeName>
        <fullName evidence="2">30S ribosomal protein S19</fullName>
    </alternativeName>
</protein>